<evidence type="ECO:0000250" key="1"/>
<evidence type="ECO:0000255" key="2"/>
<evidence type="ECO:0000256" key="3">
    <source>
        <dbReference type="SAM" id="MobiDB-lite"/>
    </source>
</evidence>
<evidence type="ECO:0000269" key="4">
    <source>
    </source>
</evidence>
<evidence type="ECO:0000305" key="5"/>
<name>SNF7_EMENI</name>
<protein>
    <recommendedName>
        <fullName>Vacuolar-sorting protein snf7</fullName>
    </recommendedName>
    <alternativeName>
        <fullName>Vacuolar protein-sorting-associated protein 32</fullName>
    </alternativeName>
</protein>
<comment type="function">
    <text evidence="1">Required for the sorting and concentration of proteins resulting in the entry of these proteins into the invaginating vesicles of the multivesicular body (MVB).</text>
</comment>
<comment type="subunit">
    <text evidence="1 4">A component of the endosomal sorting required for transport complex III (ESCRT-III) (By similarity). Interacts with palA.</text>
</comment>
<comment type="subcellular location">
    <subcellularLocation>
        <location evidence="1">Cytoplasm</location>
    </subcellularLocation>
    <subcellularLocation>
        <location evidence="1">Endosome membrane</location>
        <topology evidence="1">Peripheral membrane protein</topology>
    </subcellularLocation>
</comment>
<comment type="similarity">
    <text evidence="5">Belongs to the SNF7 family.</text>
</comment>
<keyword id="KW-0175">Coiled coil</keyword>
<keyword id="KW-0963">Cytoplasm</keyword>
<keyword id="KW-0967">Endosome</keyword>
<keyword id="KW-0472">Membrane</keyword>
<keyword id="KW-1185">Reference proteome</keyword>
<proteinExistence type="evidence at protein level"/>
<sequence length="242" mass="27203">MWSWFGGAAAQKRKEAPKNAILQLRSHLDMLQKREKHLENQMNEQEAIAKKNVTTNKNAAKAALRRKKVHEKNLEQTQAQIVQLEQQIYSIEAANINHETLAAMKAAGAAMEKIHNGMTVEQVDETILRDKLREQQAINDEIAIAITNPGFGEQVDEEDLEAELEGMEQEAMDERMLHTGTVPVADQLNRLPAPANAERKALPFPPQKRTPTDSLPAAKAKQKAEEEDEEAELEKLRAEMAM</sequence>
<dbReference type="EMBL" id="AACD01000068">
    <property type="protein sequence ID" value="EAA59339.1"/>
    <property type="molecule type" value="Genomic_DNA"/>
</dbReference>
<dbReference type="EMBL" id="BN001302">
    <property type="protein sequence ID" value="CBF74412.1"/>
    <property type="molecule type" value="Genomic_DNA"/>
</dbReference>
<dbReference type="RefSeq" id="XP_661844.1">
    <property type="nucleotide sequence ID" value="XM_656752.1"/>
</dbReference>
<dbReference type="SMR" id="Q5B5E0"/>
<dbReference type="FunCoup" id="Q5B5E0">
    <property type="interactions" value="622"/>
</dbReference>
<dbReference type="STRING" id="227321.Q5B5E0"/>
<dbReference type="EnsemblFungi" id="CBF74412">
    <property type="protein sequence ID" value="CBF74412"/>
    <property type="gene ID" value="ANIA_04240"/>
</dbReference>
<dbReference type="KEGG" id="ani:ANIA_04240"/>
<dbReference type="eggNOG" id="KOG1656">
    <property type="taxonomic scope" value="Eukaryota"/>
</dbReference>
<dbReference type="HOGENOM" id="CLU_071097_1_0_1"/>
<dbReference type="InParanoid" id="Q5B5E0"/>
<dbReference type="OMA" id="MKQIHGG"/>
<dbReference type="OrthoDB" id="5592979at2759"/>
<dbReference type="Proteomes" id="UP000000560">
    <property type="component" value="Chromosome II"/>
</dbReference>
<dbReference type="GO" id="GO:0009898">
    <property type="term" value="C:cytoplasmic side of plasma membrane"/>
    <property type="evidence" value="ECO:0000318"/>
    <property type="project" value="GO_Central"/>
</dbReference>
<dbReference type="GO" id="GO:0005829">
    <property type="term" value="C:cytosol"/>
    <property type="evidence" value="ECO:0007669"/>
    <property type="project" value="EnsemblFungi"/>
</dbReference>
<dbReference type="GO" id="GO:0000815">
    <property type="term" value="C:ESCRT III complex"/>
    <property type="evidence" value="ECO:0000318"/>
    <property type="project" value="GO_Central"/>
</dbReference>
<dbReference type="GO" id="GO:0005771">
    <property type="term" value="C:multivesicular body"/>
    <property type="evidence" value="ECO:0000318"/>
    <property type="project" value="GO_Central"/>
</dbReference>
<dbReference type="GO" id="GO:0042802">
    <property type="term" value="F:identical protein binding"/>
    <property type="evidence" value="ECO:0007669"/>
    <property type="project" value="EnsemblFungi"/>
</dbReference>
<dbReference type="GO" id="GO:1904669">
    <property type="term" value="P:ATP export"/>
    <property type="evidence" value="ECO:0007669"/>
    <property type="project" value="EnsemblFungi"/>
</dbReference>
<dbReference type="GO" id="GO:0070676">
    <property type="term" value="P:intralumenal vesicle formation"/>
    <property type="evidence" value="ECO:0007669"/>
    <property type="project" value="EnsemblFungi"/>
</dbReference>
<dbReference type="GO" id="GO:0032511">
    <property type="term" value="P:late endosome to vacuole transport via multivesicular body sorting pathway"/>
    <property type="evidence" value="ECO:0000318"/>
    <property type="project" value="GO_Central"/>
</dbReference>
<dbReference type="GO" id="GO:0007031">
    <property type="term" value="P:peroxisome organization"/>
    <property type="evidence" value="ECO:0007669"/>
    <property type="project" value="EnsemblFungi"/>
</dbReference>
<dbReference type="GO" id="GO:0043328">
    <property type="term" value="P:protein transport to vacuole involved in ubiquitin-dependent protein catabolic process via the multivesicular body sorting pathway"/>
    <property type="evidence" value="ECO:0007669"/>
    <property type="project" value="EnsemblFungi"/>
</dbReference>
<dbReference type="GO" id="GO:0061709">
    <property type="term" value="P:reticulophagy"/>
    <property type="evidence" value="ECO:0007669"/>
    <property type="project" value="EnsemblFungi"/>
</dbReference>
<dbReference type="GO" id="GO:0006900">
    <property type="term" value="P:vesicle budding from membrane"/>
    <property type="evidence" value="ECO:0000318"/>
    <property type="project" value="GO_Central"/>
</dbReference>
<dbReference type="Gene3D" id="1.10.287.1060">
    <property type="entry name" value="ESAT-6-like"/>
    <property type="match status" value="1"/>
</dbReference>
<dbReference type="InterPro" id="IPR005024">
    <property type="entry name" value="Snf7_fam"/>
</dbReference>
<dbReference type="PANTHER" id="PTHR22761">
    <property type="entry name" value="CHARGED MULTIVESICULAR BODY PROTEIN"/>
    <property type="match status" value="1"/>
</dbReference>
<dbReference type="PANTHER" id="PTHR22761:SF10">
    <property type="entry name" value="GH13992P"/>
    <property type="match status" value="1"/>
</dbReference>
<dbReference type="Pfam" id="PF03357">
    <property type="entry name" value="Snf7"/>
    <property type="match status" value="1"/>
</dbReference>
<reference key="1">
    <citation type="journal article" date="2005" name="Nature">
        <title>Sequencing of Aspergillus nidulans and comparative analysis with A. fumigatus and A. oryzae.</title>
        <authorList>
            <person name="Galagan J.E."/>
            <person name="Calvo S.E."/>
            <person name="Cuomo C."/>
            <person name="Ma L.-J."/>
            <person name="Wortman J.R."/>
            <person name="Batzoglou S."/>
            <person name="Lee S.-I."/>
            <person name="Bastuerkmen M."/>
            <person name="Spevak C.C."/>
            <person name="Clutterbuck J."/>
            <person name="Kapitonov V."/>
            <person name="Jurka J."/>
            <person name="Scazzocchio C."/>
            <person name="Farman M.L."/>
            <person name="Butler J."/>
            <person name="Purcell S."/>
            <person name="Harris S."/>
            <person name="Braus G.H."/>
            <person name="Draht O."/>
            <person name="Busch S."/>
            <person name="D'Enfert C."/>
            <person name="Bouchier C."/>
            <person name="Goldman G.H."/>
            <person name="Bell-Pedersen D."/>
            <person name="Griffiths-Jones S."/>
            <person name="Doonan J.H."/>
            <person name="Yu J."/>
            <person name="Vienken K."/>
            <person name="Pain A."/>
            <person name="Freitag M."/>
            <person name="Selker E.U."/>
            <person name="Archer D.B."/>
            <person name="Penalva M.A."/>
            <person name="Oakley B.R."/>
            <person name="Momany M."/>
            <person name="Tanaka T."/>
            <person name="Kumagai T."/>
            <person name="Asai K."/>
            <person name="Machida M."/>
            <person name="Nierman W.C."/>
            <person name="Denning D.W."/>
            <person name="Caddick M.X."/>
            <person name="Hynes M."/>
            <person name="Paoletti M."/>
            <person name="Fischer R."/>
            <person name="Miller B.L."/>
            <person name="Dyer P.S."/>
            <person name="Sachs M.S."/>
            <person name="Osmani S.A."/>
            <person name="Birren B.W."/>
        </authorList>
    </citation>
    <scope>NUCLEOTIDE SEQUENCE [LARGE SCALE GENOMIC DNA]</scope>
    <source>
        <strain>FGSC A4 / ATCC 38163 / CBS 112.46 / NRRL 194 / M139</strain>
    </source>
</reference>
<reference key="2">
    <citation type="journal article" date="2009" name="Fungal Genet. Biol.">
        <title>The 2008 update of the Aspergillus nidulans genome annotation: a community effort.</title>
        <authorList>
            <person name="Wortman J.R."/>
            <person name="Gilsenan J.M."/>
            <person name="Joardar V."/>
            <person name="Deegan J."/>
            <person name="Clutterbuck J."/>
            <person name="Andersen M.R."/>
            <person name="Archer D."/>
            <person name="Bencina M."/>
            <person name="Braus G."/>
            <person name="Coutinho P."/>
            <person name="von Dohren H."/>
            <person name="Doonan J."/>
            <person name="Driessen A.J."/>
            <person name="Durek P."/>
            <person name="Espeso E."/>
            <person name="Fekete E."/>
            <person name="Flipphi M."/>
            <person name="Estrada C.G."/>
            <person name="Geysens S."/>
            <person name="Goldman G."/>
            <person name="de Groot P.W."/>
            <person name="Hansen K."/>
            <person name="Harris S.D."/>
            <person name="Heinekamp T."/>
            <person name="Helmstaedt K."/>
            <person name="Henrissat B."/>
            <person name="Hofmann G."/>
            <person name="Homan T."/>
            <person name="Horio T."/>
            <person name="Horiuchi H."/>
            <person name="James S."/>
            <person name="Jones M."/>
            <person name="Karaffa L."/>
            <person name="Karanyi Z."/>
            <person name="Kato M."/>
            <person name="Keller N."/>
            <person name="Kelly D.E."/>
            <person name="Kiel J.A."/>
            <person name="Kim J.M."/>
            <person name="van der Klei I.J."/>
            <person name="Klis F.M."/>
            <person name="Kovalchuk A."/>
            <person name="Krasevec N."/>
            <person name="Kubicek C.P."/>
            <person name="Liu B."/>
            <person name="Maccabe A."/>
            <person name="Meyer V."/>
            <person name="Mirabito P."/>
            <person name="Miskei M."/>
            <person name="Mos M."/>
            <person name="Mullins J."/>
            <person name="Nelson D.R."/>
            <person name="Nielsen J."/>
            <person name="Oakley B.R."/>
            <person name="Osmani S.A."/>
            <person name="Pakula T."/>
            <person name="Paszewski A."/>
            <person name="Paulsen I."/>
            <person name="Pilsyk S."/>
            <person name="Pocsi I."/>
            <person name="Punt P.J."/>
            <person name="Ram A.F."/>
            <person name="Ren Q."/>
            <person name="Robellet X."/>
            <person name="Robson G."/>
            <person name="Seiboth B."/>
            <person name="van Solingen P."/>
            <person name="Specht T."/>
            <person name="Sun J."/>
            <person name="Taheri-Talesh N."/>
            <person name="Takeshita N."/>
            <person name="Ussery D."/>
            <person name="vanKuyk P.A."/>
            <person name="Visser H."/>
            <person name="van de Vondervoort P.J."/>
            <person name="de Vries R.P."/>
            <person name="Walton J."/>
            <person name="Xiang X."/>
            <person name="Xiong Y."/>
            <person name="Zeng A.P."/>
            <person name="Brandt B.W."/>
            <person name="Cornell M.J."/>
            <person name="van den Hondel C.A."/>
            <person name="Visser J."/>
            <person name="Oliver S.G."/>
            <person name="Turner G."/>
        </authorList>
    </citation>
    <scope>GENOME REANNOTATION</scope>
    <source>
        <strain>FGSC A4 / ATCC 38163 / CBS 112.46 / NRRL 194 / M139</strain>
    </source>
</reference>
<reference key="3">
    <citation type="journal article" date="2003" name="Mol. Cell. Biol.">
        <title>YPXL/I is a protein interaction motif recognized by Aspergillus PalA and its human homologue, AIP1/Alix.</title>
        <authorList>
            <person name="Vincent O."/>
            <person name="Rainbow L."/>
            <person name="Tilburn J."/>
            <person name="Arst H.N. Jr."/>
            <person name="Penalva M.A."/>
        </authorList>
    </citation>
    <scope>INTERACTION WITH PALA</scope>
</reference>
<feature type="chain" id="PRO_0000211447" description="Vacuolar-sorting protein snf7">
    <location>
        <begin position="1"/>
        <end position="242"/>
    </location>
</feature>
<feature type="region of interest" description="Disordered" evidence="3">
    <location>
        <begin position="187"/>
        <end position="242"/>
    </location>
</feature>
<feature type="coiled-coil region" evidence="2">
    <location>
        <begin position="19"/>
        <end position="95"/>
    </location>
</feature>
<feature type="coiled-coil region" evidence="2">
    <location>
        <begin position="152"/>
        <end position="179"/>
    </location>
</feature>
<feature type="coiled-coil region" evidence="2">
    <location>
        <begin position="216"/>
        <end position="242"/>
    </location>
</feature>
<feature type="compositionally biased region" description="Basic and acidic residues" evidence="3">
    <location>
        <begin position="233"/>
        <end position="242"/>
    </location>
</feature>
<organism>
    <name type="scientific">Emericella nidulans (strain FGSC A4 / ATCC 38163 / CBS 112.46 / NRRL 194 / M139)</name>
    <name type="common">Aspergillus nidulans</name>
    <dbReference type="NCBI Taxonomy" id="227321"/>
    <lineage>
        <taxon>Eukaryota</taxon>
        <taxon>Fungi</taxon>
        <taxon>Dikarya</taxon>
        <taxon>Ascomycota</taxon>
        <taxon>Pezizomycotina</taxon>
        <taxon>Eurotiomycetes</taxon>
        <taxon>Eurotiomycetidae</taxon>
        <taxon>Eurotiales</taxon>
        <taxon>Aspergillaceae</taxon>
        <taxon>Aspergillus</taxon>
        <taxon>Aspergillus subgen. Nidulantes</taxon>
    </lineage>
</organism>
<gene>
    <name type="primary">snf7</name>
    <name type="synonym">vps32</name>
    <name type="ORF">AN4240</name>
</gene>
<accession>Q5B5E0</accession>
<accession>C8V487</accession>